<proteinExistence type="evidence at protein level"/>
<reference key="1">
    <citation type="journal article" date="2012" name="J. Biol. Chem.">
        <title>Bifunctional cis-abienol synthase from Abies balsamea discovered by transcriptome sequencing and its implications for diterpenoid fragrance production.</title>
        <authorList>
            <person name="Zerbe P."/>
            <person name="Chiang A."/>
            <person name="Yuen M."/>
            <person name="Hamberger B."/>
            <person name="Hamberger B."/>
            <person name="Draper J.A."/>
            <person name="Britton R."/>
            <person name="Bohlmann J."/>
        </authorList>
    </citation>
    <scope>NUCLEOTIDE SEQUENCE [MRNA]</scope>
    <scope>FUNCTION</scope>
    <scope>CATALYTIC ACTIVITY</scope>
</reference>
<dbReference type="EC" id="4.2.3.44"/>
<dbReference type="EC" id="5.5.1.12"/>
<dbReference type="EMBL" id="JN254806">
    <property type="protein sequence ID" value="AEL99951.1"/>
    <property type="molecule type" value="mRNA"/>
</dbReference>
<dbReference type="SMR" id="H8ZM71"/>
<dbReference type="BRENDA" id="4.2.3.B25">
    <property type="organism ID" value="13176"/>
</dbReference>
<dbReference type="BRENDA" id="5.5.1.12">
    <property type="organism ID" value="13176"/>
</dbReference>
<dbReference type="UniPathway" id="UPA00924"/>
<dbReference type="GO" id="GO:0009507">
    <property type="term" value="C:chloroplast"/>
    <property type="evidence" value="ECO:0007669"/>
    <property type="project" value="UniProtKB-SubCell"/>
</dbReference>
<dbReference type="GO" id="GO:0050559">
    <property type="term" value="F:copalyl diphosphate synthase activity"/>
    <property type="evidence" value="ECO:0007669"/>
    <property type="project" value="UniProtKB-EC"/>
</dbReference>
<dbReference type="GO" id="GO:0000287">
    <property type="term" value="F:magnesium ion binding"/>
    <property type="evidence" value="ECO:0007669"/>
    <property type="project" value="InterPro"/>
</dbReference>
<dbReference type="GO" id="GO:0010333">
    <property type="term" value="F:terpene synthase activity"/>
    <property type="evidence" value="ECO:0007669"/>
    <property type="project" value="InterPro"/>
</dbReference>
<dbReference type="GO" id="GO:0016102">
    <property type="term" value="P:diterpenoid biosynthetic process"/>
    <property type="evidence" value="ECO:0007669"/>
    <property type="project" value="InterPro"/>
</dbReference>
<dbReference type="CDD" id="cd00684">
    <property type="entry name" value="Terpene_cyclase_plant_C1"/>
    <property type="match status" value="1"/>
</dbReference>
<dbReference type="FunFam" id="1.50.10.130:FF:000002">
    <property type="entry name" value="Ent-copalyl diphosphate synthase, chloroplastic"/>
    <property type="match status" value="1"/>
</dbReference>
<dbReference type="FunFam" id="1.10.600.10:FF:000005">
    <property type="entry name" value="Ent-kaur-16-ene synthase, chloroplastic"/>
    <property type="match status" value="1"/>
</dbReference>
<dbReference type="Gene3D" id="1.50.10.160">
    <property type="match status" value="1"/>
</dbReference>
<dbReference type="Gene3D" id="1.10.600.10">
    <property type="entry name" value="Farnesyl Diphosphate Synthase"/>
    <property type="match status" value="1"/>
</dbReference>
<dbReference type="Gene3D" id="1.50.10.130">
    <property type="entry name" value="Terpene synthase, N-terminal domain"/>
    <property type="match status" value="1"/>
</dbReference>
<dbReference type="InterPro" id="IPR008949">
    <property type="entry name" value="Isoprenoid_synthase_dom_sf"/>
</dbReference>
<dbReference type="InterPro" id="IPR034741">
    <property type="entry name" value="Terpene_cyclase-like_1_C"/>
</dbReference>
<dbReference type="InterPro" id="IPR044814">
    <property type="entry name" value="Terpene_cyclase_plant_C1"/>
</dbReference>
<dbReference type="InterPro" id="IPR001906">
    <property type="entry name" value="Terpene_synth_N"/>
</dbReference>
<dbReference type="InterPro" id="IPR036965">
    <property type="entry name" value="Terpene_synth_N_sf"/>
</dbReference>
<dbReference type="InterPro" id="IPR050148">
    <property type="entry name" value="Terpene_synthase-like"/>
</dbReference>
<dbReference type="InterPro" id="IPR005630">
    <property type="entry name" value="Terpene_synthase_metal-bd"/>
</dbReference>
<dbReference type="InterPro" id="IPR008930">
    <property type="entry name" value="Terpenoid_cyclase/PrenylTrfase"/>
</dbReference>
<dbReference type="PANTHER" id="PTHR31739:SF25">
    <property type="entry name" value="(E,E)-GERANYLLINALOOL SYNTHASE"/>
    <property type="match status" value="1"/>
</dbReference>
<dbReference type="PANTHER" id="PTHR31739">
    <property type="entry name" value="ENT-COPALYL DIPHOSPHATE SYNTHASE, CHLOROPLASTIC"/>
    <property type="match status" value="1"/>
</dbReference>
<dbReference type="Pfam" id="PF01397">
    <property type="entry name" value="Terpene_synth"/>
    <property type="match status" value="1"/>
</dbReference>
<dbReference type="Pfam" id="PF03936">
    <property type="entry name" value="Terpene_synth_C"/>
    <property type="match status" value="1"/>
</dbReference>
<dbReference type="SFLD" id="SFLDS00005">
    <property type="entry name" value="Isoprenoid_Synthase_Type_I"/>
    <property type="match status" value="1"/>
</dbReference>
<dbReference type="SFLD" id="SFLDG01019">
    <property type="entry name" value="Terpene_Cyclase_Like_1_C_Termi"/>
    <property type="match status" value="1"/>
</dbReference>
<dbReference type="SFLD" id="SFLDG01014">
    <property type="entry name" value="Terpene_Cyclase_Like_1_N-term"/>
    <property type="match status" value="1"/>
</dbReference>
<dbReference type="SFLD" id="SFLDG01605">
    <property type="entry name" value="Terpene_Cyclase_Like_1_N-term"/>
    <property type="match status" value="1"/>
</dbReference>
<dbReference type="SUPFAM" id="SSF48239">
    <property type="entry name" value="Terpenoid cyclases/Protein prenyltransferases"/>
    <property type="match status" value="2"/>
</dbReference>
<dbReference type="SUPFAM" id="SSF48576">
    <property type="entry name" value="Terpenoid synthases"/>
    <property type="match status" value="1"/>
</dbReference>
<keyword id="KW-0150">Chloroplast</keyword>
<keyword id="KW-0413">Isomerase</keyword>
<keyword id="KW-0456">Lyase</keyword>
<keyword id="KW-0460">Magnesium</keyword>
<keyword id="KW-0479">Metal-binding</keyword>
<keyword id="KW-0511">Multifunctional enzyme</keyword>
<keyword id="KW-0934">Plastid</keyword>
<keyword id="KW-0809">Transit peptide</keyword>
<feature type="transit peptide" description="Chloroplast" evidence="5">
    <location>
        <begin position="1" status="less than"/>
        <end position="53"/>
    </location>
</feature>
<feature type="chain" id="PRO_0000423340" description="Bifunctional isopimaradiene synthase, chloroplastic">
    <location>
        <begin position="54"/>
        <end position="852"/>
    </location>
</feature>
<feature type="short sequence motif" description="DXDD motif" evidence="7">
    <location>
        <begin position="385"/>
        <end position="388"/>
    </location>
</feature>
<feature type="short sequence motif" description="DDXXD motif" evidence="7">
    <location>
        <begin position="604"/>
        <end position="608"/>
    </location>
</feature>
<feature type="binding site" evidence="3">
    <location>
        <position position="252"/>
    </location>
    <ligand>
        <name>substrate</name>
    </ligand>
</feature>
<feature type="binding site" evidence="2">
    <location>
        <position position="385"/>
    </location>
    <ligand>
        <name>Mg(2+)</name>
        <dbReference type="ChEBI" id="CHEBI:18420"/>
        <label>4</label>
    </ligand>
</feature>
<feature type="binding site" evidence="2">
    <location>
        <position position="387"/>
    </location>
    <ligand>
        <name>Mg(2+)</name>
        <dbReference type="ChEBI" id="CHEBI:18420"/>
        <label>4</label>
    </ligand>
</feature>
<feature type="binding site" evidence="3">
    <location>
        <position position="472"/>
    </location>
    <ligand>
        <name>substrate</name>
    </ligand>
</feature>
<feature type="binding site" evidence="4">
    <location>
        <position position="604"/>
    </location>
    <ligand>
        <name>Mg(2+)</name>
        <dbReference type="ChEBI" id="CHEBI:18420"/>
        <label>1</label>
    </ligand>
</feature>
<feature type="binding site" evidence="4">
    <location>
        <position position="604"/>
    </location>
    <ligand>
        <name>Mg(2+)</name>
        <dbReference type="ChEBI" id="CHEBI:18420"/>
        <label>2</label>
    </ligand>
</feature>
<feature type="binding site" evidence="4">
    <location>
        <position position="608"/>
    </location>
    <ligand>
        <name>Mg(2+)</name>
        <dbReference type="ChEBI" id="CHEBI:18420"/>
        <label>1</label>
    </ligand>
</feature>
<feature type="binding site" evidence="4">
    <location>
        <position position="608"/>
    </location>
    <ligand>
        <name>Mg(2+)</name>
        <dbReference type="ChEBI" id="CHEBI:18420"/>
        <label>2</label>
    </ligand>
</feature>
<feature type="binding site" evidence="4">
    <location>
        <position position="748"/>
    </location>
    <ligand>
        <name>Mg(2+)</name>
        <dbReference type="ChEBI" id="CHEBI:18420"/>
        <label>3</label>
    </ligand>
</feature>
<feature type="binding site" evidence="4">
    <location>
        <position position="752"/>
    </location>
    <ligand>
        <name>Mg(2+)</name>
        <dbReference type="ChEBI" id="CHEBI:18420"/>
        <label>3</label>
    </ligand>
</feature>
<feature type="binding site" evidence="4">
    <location>
        <position position="756"/>
    </location>
    <ligand>
        <name>Mg(2+)</name>
        <dbReference type="ChEBI" id="CHEBI:18420"/>
        <label>3</label>
    </ligand>
</feature>
<feature type="non-terminal residue">
    <location>
        <position position="1"/>
    </location>
</feature>
<protein>
    <recommendedName>
        <fullName>Bifunctional isopimaradiene synthase, chloroplastic</fullName>
        <shortName>AbIso</shortName>
    </recommendedName>
    <alternativeName>
        <fullName>Diterpene synthase TPS2</fullName>
        <shortName>AbdiTPS2</shortName>
    </alternativeName>
    <domain>
        <recommendedName>
            <fullName>Isopimara-7,15-diene synthase</fullName>
            <shortName>Isopimaradiene synthase</shortName>
            <ecNumber>4.2.3.44</ecNumber>
        </recommendedName>
    </domain>
    <domain>
        <recommendedName>
            <fullName>Copalyl diphosphate synthase</fullName>
            <ecNumber>5.5.1.12</ecNumber>
        </recommendedName>
    </domain>
</protein>
<accession>H8ZM71</accession>
<name>ISO_ABIBA</name>
<evidence type="ECO:0000250" key="1"/>
<evidence type="ECO:0000250" key="2">
    <source>
        <dbReference type="UniProtKB" id="C7BKP9"/>
    </source>
</evidence>
<evidence type="ECO:0000250" key="3">
    <source>
        <dbReference type="UniProtKB" id="Q38802"/>
    </source>
</evidence>
<evidence type="ECO:0000250" key="4">
    <source>
        <dbReference type="UniProtKB" id="Q40577"/>
    </source>
</evidence>
<evidence type="ECO:0000255" key="5"/>
<evidence type="ECO:0000269" key="6">
    <source>
    </source>
</evidence>
<evidence type="ECO:0000305" key="7"/>
<gene>
    <name type="primary">TPS-ISO</name>
</gene>
<comment type="function">
    <text evidence="1 6">Involved in defensive oleoresin formation in conifers in response to insect attack or other injury (By similarity). Involved in diterpene (C20) olefins biosynthesis. Bifunctional enzyme that catalyzes two sequential cyclizations of geranylgeranyl diphosphate (GGPP) to isopimara-7,15-diene.</text>
</comment>
<comment type="catalytic activity">
    <reaction evidence="6">
        <text>(2E,6E,10E)-geranylgeranyl diphosphate = (+)-copalyl diphosphate</text>
        <dbReference type="Rhea" id="RHEA:24316"/>
        <dbReference type="ChEBI" id="CHEBI:58635"/>
        <dbReference type="ChEBI" id="CHEBI:58756"/>
        <dbReference type="EC" id="5.5.1.12"/>
    </reaction>
</comment>
<comment type="catalytic activity">
    <reaction evidence="6">
        <text>(+)-copalyl diphosphate = isopimara-7,15-diene + diphosphate</text>
        <dbReference type="Rhea" id="RHEA:26128"/>
        <dbReference type="ChEBI" id="CHEBI:33019"/>
        <dbReference type="ChEBI" id="CHEBI:52280"/>
        <dbReference type="ChEBI" id="CHEBI:58635"/>
        <dbReference type="EC" id="4.2.3.44"/>
    </reaction>
</comment>
<comment type="cofactor">
    <cofactor evidence="4">
        <name>Mg(2+)</name>
        <dbReference type="ChEBI" id="CHEBI:18420"/>
    </cofactor>
    <text evidence="4">Binds 3 Mg(2+) ions per subunit.</text>
</comment>
<comment type="pathway">
    <text>Terpene metabolism; oleoresin biosynthesis.</text>
</comment>
<comment type="subcellular location">
    <subcellularLocation>
        <location evidence="1">Plastid</location>
        <location evidence="1">Chloroplast</location>
    </subcellularLocation>
</comment>
<comment type="domain">
    <text evidence="7">The Asp-Xaa-Asp-Asp (DXDD) motif is important for the catalytic activity in the class II active site relevant for the cyclization of GGPP. The Asp-Asp-Xaa-Xaa-Asp/Glu (DDXXD/E) motif is important for the catalytic activity in the class I active site, presumably through binding to Mg(2+).</text>
</comment>
<comment type="similarity">
    <text evidence="7">Belongs to the terpene synthase family. Tpsd subfamily.</text>
</comment>
<sequence>HHLTANTQSIPHFSTTLNAGSSARKRRSLYLRWGKGSNKIIACVGEGATSVPYQSAEKNDSLYSSTLVKREFPPGFWKDDLIDSLTSSHKVAASDEKRIETLISEIKNMFRCMGYGETNPSAYDTAWVARIPALDGSDNPHFPETVEWILQNQLKDGSWGEGFYFLAYDRILATLACIITLTLWRTGETQVHKGIEFFRTQAGKMEDEADSHRPSGFEIVFPAMLKEAKILGLDLPYDLPFLKQIIEKREAKLKRIPTDVLYALPTTLLYSLEGLQEIVDWQKIMKLQSKDGSFLSSPASTAAVFMRTGNKKCLDFLNFVLKKFGNHVPCHYPLDLFERLWAVDTVERLGIDRHFKEEIKDALDYVYSHWDERGIGWARENPVPDIDDTAMGLRILRLHGYNVSSDVLKTFRDENGEFFCFLGQTQRGVTDMLNVNRCSHVSFPGETIMEEAKLCTERYLRNALENVDAFDKWAFKKNIRGEVEYALKYTWHKSMPRLEARSYIENYGPNDAWLGKTVYRMPYISNEKYLELAKLDFNKLQSIHQTELQDLRRWWKSSGFSKLNFTRERVTEIYFSSASFMFEPEFSKCREVYTKASIFTLIFDDLYDAHGSLDDLKLFSEAVKRWDLSLLERMPQEMKICFLGFYNTFNEIAEEVHKRQGRDMLGHIQNVWEILLAAYTKEAEWSKTKYVPSFDEYIENASVSITLGTIVLISTLFIGEVLTDHVLSKINHGSRFLHLMGLTGRLVNDTKTYQAERGQGEEASAIQCYMKDHPEISEEEALNHVYNVMENALQELNKEFVNNKEVPPNCRRLVFNTARIMQLFYMQGDGLTLSHDMEIKDHVKTCLFIPIA</sequence>
<organism>
    <name type="scientific">Abies balsamea</name>
    <name type="common">Balsam fir</name>
    <name type="synonym">Pinus balsamea</name>
    <dbReference type="NCBI Taxonomy" id="90345"/>
    <lineage>
        <taxon>Eukaryota</taxon>
        <taxon>Viridiplantae</taxon>
        <taxon>Streptophyta</taxon>
        <taxon>Embryophyta</taxon>
        <taxon>Tracheophyta</taxon>
        <taxon>Spermatophyta</taxon>
        <taxon>Pinopsida</taxon>
        <taxon>Pinidae</taxon>
        <taxon>Conifers I</taxon>
        <taxon>Pinales</taxon>
        <taxon>Pinaceae</taxon>
        <taxon>Abies</taxon>
    </lineage>
</organism>